<dbReference type="EC" id="4.3.2.3" evidence="1"/>
<dbReference type="EMBL" id="CP000548">
    <property type="protein sequence ID" value="ABO06660.1"/>
    <property type="molecule type" value="Genomic_DNA"/>
</dbReference>
<dbReference type="RefSeq" id="WP_004193471.1">
    <property type="nucleotide sequence ID" value="NZ_CP007802.1"/>
</dbReference>
<dbReference type="SMR" id="A3MKP1"/>
<dbReference type="KEGG" id="bmaz:BM44_1846"/>
<dbReference type="KEGG" id="bmn:BMA10247_1276"/>
<dbReference type="PATRIC" id="fig|320389.8.peg.2067"/>
<dbReference type="UniPathway" id="UPA00395"/>
<dbReference type="GO" id="GO:0004848">
    <property type="term" value="F:ureidoglycolate hydrolase activity"/>
    <property type="evidence" value="ECO:0007669"/>
    <property type="project" value="InterPro"/>
</dbReference>
<dbReference type="GO" id="GO:0050385">
    <property type="term" value="F:ureidoglycolate lyase activity"/>
    <property type="evidence" value="ECO:0007669"/>
    <property type="project" value="UniProtKB-UniRule"/>
</dbReference>
<dbReference type="GO" id="GO:0000256">
    <property type="term" value="P:allantoin catabolic process"/>
    <property type="evidence" value="ECO:0007669"/>
    <property type="project" value="UniProtKB-UniRule"/>
</dbReference>
<dbReference type="GO" id="GO:0006145">
    <property type="term" value="P:purine nucleobase catabolic process"/>
    <property type="evidence" value="ECO:0007669"/>
    <property type="project" value="UniProtKB-UniRule"/>
</dbReference>
<dbReference type="CDD" id="cd20298">
    <property type="entry name" value="cupin_UAH"/>
    <property type="match status" value="1"/>
</dbReference>
<dbReference type="Gene3D" id="2.60.120.480">
    <property type="entry name" value="Ureidoglycolate hydrolase"/>
    <property type="match status" value="1"/>
</dbReference>
<dbReference type="HAMAP" id="MF_00616">
    <property type="entry name" value="Ureidogly_lyase"/>
    <property type="match status" value="1"/>
</dbReference>
<dbReference type="InterPro" id="IPR011051">
    <property type="entry name" value="RmlC_Cupin_sf"/>
</dbReference>
<dbReference type="InterPro" id="IPR047233">
    <property type="entry name" value="UAH_cupin"/>
</dbReference>
<dbReference type="InterPro" id="IPR007247">
    <property type="entry name" value="Ureidogly_lyase"/>
</dbReference>
<dbReference type="InterPro" id="IPR023525">
    <property type="entry name" value="Ureidogly_lyase_bac"/>
</dbReference>
<dbReference type="InterPro" id="IPR024060">
    <property type="entry name" value="Ureidoglycolate_lyase_dom_sf"/>
</dbReference>
<dbReference type="NCBIfam" id="NF002950">
    <property type="entry name" value="PRK03606.1-3"/>
    <property type="match status" value="1"/>
</dbReference>
<dbReference type="NCBIfam" id="NF009932">
    <property type="entry name" value="PRK13395.1"/>
    <property type="match status" value="1"/>
</dbReference>
<dbReference type="PANTHER" id="PTHR21221">
    <property type="entry name" value="UREIDOGLYCOLATE HYDROLASE"/>
    <property type="match status" value="1"/>
</dbReference>
<dbReference type="PANTHER" id="PTHR21221:SF1">
    <property type="entry name" value="UREIDOGLYCOLATE LYASE"/>
    <property type="match status" value="1"/>
</dbReference>
<dbReference type="Pfam" id="PF04115">
    <property type="entry name" value="Ureidogly_lyase"/>
    <property type="match status" value="1"/>
</dbReference>
<dbReference type="PIRSF" id="PIRSF017306">
    <property type="entry name" value="Ureidogly_hydro"/>
    <property type="match status" value="1"/>
</dbReference>
<dbReference type="SUPFAM" id="SSF51182">
    <property type="entry name" value="RmlC-like cupins"/>
    <property type="match status" value="1"/>
</dbReference>
<proteinExistence type="inferred from homology"/>
<feature type="chain" id="PRO_1000061347" description="Ureidoglycolate lyase">
    <location>
        <begin position="1"/>
        <end position="170"/>
    </location>
</feature>
<sequence length="170" mass="18497">MKTLSIEPLTRAAFAPFGDVIETQGAKQIPINLGTTMRFHDLAKIDVADEGGRPLVNLFRGQPRTLPFEVTMLERHPLGSQAFVPLTDRPYIVVVAPAGDLDASKIRAFVTSGWQGVNYAKGVWHHPLIALGEVSDFIVVDRGGDGRNLNEQNLPESLWLTDDALLAVGA</sequence>
<protein>
    <recommendedName>
        <fullName evidence="1">Ureidoglycolate lyase</fullName>
        <ecNumber evidence="1">4.3.2.3</ecNumber>
    </recommendedName>
    <alternativeName>
        <fullName evidence="1">Ureidoglycolatase</fullName>
    </alternativeName>
</protein>
<comment type="function">
    <text evidence="1">Catalyzes the catabolism of the allantoin degradation intermediate (S)-ureidoglycolate, generating urea and glyoxylate. Involved in the utilization of allantoin as nitrogen source.</text>
</comment>
<comment type="catalytic activity">
    <reaction evidence="1">
        <text>(S)-ureidoglycolate = urea + glyoxylate</text>
        <dbReference type="Rhea" id="RHEA:11304"/>
        <dbReference type="ChEBI" id="CHEBI:16199"/>
        <dbReference type="ChEBI" id="CHEBI:36655"/>
        <dbReference type="ChEBI" id="CHEBI:57296"/>
        <dbReference type="EC" id="4.3.2.3"/>
    </reaction>
</comment>
<comment type="cofactor">
    <cofactor evidence="1">
        <name>Ni(2+)</name>
        <dbReference type="ChEBI" id="CHEBI:49786"/>
    </cofactor>
</comment>
<comment type="pathway">
    <text evidence="1">Nitrogen metabolism; (S)-allantoin degradation.</text>
</comment>
<comment type="subunit">
    <text evidence="1">Homodimer.</text>
</comment>
<comment type="similarity">
    <text evidence="1">Belongs to the ureidoglycolate lyase family.</text>
</comment>
<keyword id="KW-0456">Lyase</keyword>
<keyword id="KW-0659">Purine metabolism</keyword>
<organism>
    <name type="scientific">Burkholderia mallei (strain NCTC 10247)</name>
    <dbReference type="NCBI Taxonomy" id="320389"/>
    <lineage>
        <taxon>Bacteria</taxon>
        <taxon>Pseudomonadati</taxon>
        <taxon>Pseudomonadota</taxon>
        <taxon>Betaproteobacteria</taxon>
        <taxon>Burkholderiales</taxon>
        <taxon>Burkholderiaceae</taxon>
        <taxon>Burkholderia</taxon>
        <taxon>pseudomallei group</taxon>
    </lineage>
</organism>
<gene>
    <name evidence="1" type="primary">allA</name>
    <name type="ordered locus">BMA10247_1276</name>
</gene>
<accession>A3MKP1</accession>
<reference key="1">
    <citation type="journal article" date="2010" name="Genome Biol. Evol.">
        <title>Continuing evolution of Burkholderia mallei through genome reduction and large-scale rearrangements.</title>
        <authorList>
            <person name="Losada L."/>
            <person name="Ronning C.M."/>
            <person name="DeShazer D."/>
            <person name="Woods D."/>
            <person name="Fedorova N."/>
            <person name="Kim H.S."/>
            <person name="Shabalina S.A."/>
            <person name="Pearson T.R."/>
            <person name="Brinkac L."/>
            <person name="Tan P."/>
            <person name="Nandi T."/>
            <person name="Crabtree J."/>
            <person name="Badger J."/>
            <person name="Beckstrom-Sternberg S."/>
            <person name="Saqib M."/>
            <person name="Schutzer S.E."/>
            <person name="Keim P."/>
            <person name="Nierman W.C."/>
        </authorList>
    </citation>
    <scope>NUCLEOTIDE SEQUENCE [LARGE SCALE GENOMIC DNA]</scope>
    <source>
        <strain>NCTC 10247</strain>
    </source>
</reference>
<name>ALLA_BURM7</name>
<evidence type="ECO:0000255" key="1">
    <source>
        <dbReference type="HAMAP-Rule" id="MF_00616"/>
    </source>
</evidence>